<sequence>MTPASRSACRWALLLLAVLWPQQRAAGSGIFQLRLQEFVNQRGMLANGQSCEPGCRTFFRICLKHFQATFSEGPCTFGNVSTPVLGTNSFVVRDKNSGSGRNPLQLPFNFTWPGTFSLNIQAWHTPGDDLRPETSPGNSLISQIIIQGSLAVGKIWRTDEQNDTLTRLSYSYRVICSDNYYGESCSRLCKKRDDHFGHYECQPDGSLSCLPGWTGKYCDQPICLSGCHEQNGYCSKPDECICRPGWQGRLCNECIPHNGCRHGTCSIPWQCACDEGWGGLFCDQDLNYCTHHSPCKNGSTCSNSGPKGYTCTCLPGYTGEHCELGLSKCASNPCRNGGSCKDQENSYHCLCPPGYYGQHCEHSTLTCADSPCFNGGSCRERNQGSSYACECPPNFTGSNCEKKVDRCTSNPCANGGQCQNRGPSRTCRCRPGFTGTHCELHISDCARSPCAHGGTCHDLENGPVCTCPAGFSGRRCEVRITHDACASGPCFNGATCYTGLSPNNFVCNCPYGFVGSRCEFPVGLPPSFPWVAVSLGVGLVVLLVLLVMVVVAVRQLRLRRPDDESREAMNNLSDFQKDNLIPAAQLKNTNQKKELEVDCGLDKSNCGKLQNHTLDYNLAPGLLGRGGMPGKYPHSDKSLGEKVPLRLHSEKPECRISAICSPRDSMYQSVCLISEERNECVIATEV</sequence>
<accession>Q9JI71</accession>
<accession>Q9DBU9</accession>
<accession>Q9JHZ7</accession>
<keyword id="KW-0037">Angiogenesis</keyword>
<keyword id="KW-1003">Cell membrane</keyword>
<keyword id="KW-0217">Developmental protein</keyword>
<keyword id="KW-0221">Differentiation</keyword>
<keyword id="KW-1015">Disulfide bond</keyword>
<keyword id="KW-0245">EGF-like domain</keyword>
<keyword id="KW-0325">Glycoprotein</keyword>
<keyword id="KW-0472">Membrane</keyword>
<keyword id="KW-0524">Neurogenesis</keyword>
<keyword id="KW-0914">Notch signaling pathway</keyword>
<keyword id="KW-1185">Reference proteome</keyword>
<keyword id="KW-0677">Repeat</keyword>
<keyword id="KW-0716">Sensory transduction</keyword>
<keyword id="KW-0732">Signal</keyword>
<keyword id="KW-0812">Transmembrane</keyword>
<keyword id="KW-1133">Transmembrane helix</keyword>
<keyword id="KW-0844">Vision</keyword>
<proteinExistence type="evidence at protein level"/>
<organism>
    <name type="scientific">Mus musculus</name>
    <name type="common">Mouse</name>
    <dbReference type="NCBI Taxonomy" id="10090"/>
    <lineage>
        <taxon>Eukaryota</taxon>
        <taxon>Metazoa</taxon>
        <taxon>Chordata</taxon>
        <taxon>Craniata</taxon>
        <taxon>Vertebrata</taxon>
        <taxon>Euteleostomi</taxon>
        <taxon>Mammalia</taxon>
        <taxon>Eutheria</taxon>
        <taxon>Euarchontoglires</taxon>
        <taxon>Glires</taxon>
        <taxon>Rodentia</taxon>
        <taxon>Myomorpha</taxon>
        <taxon>Muroidea</taxon>
        <taxon>Muridae</taxon>
        <taxon>Murinae</taxon>
        <taxon>Mus</taxon>
        <taxon>Mus</taxon>
    </lineage>
</organism>
<dbReference type="EMBL" id="AF253469">
    <property type="protein sequence ID" value="AAF76428.1"/>
    <property type="molecule type" value="mRNA"/>
</dbReference>
<dbReference type="EMBL" id="AF273454">
    <property type="protein sequence ID" value="AAF78785.1"/>
    <property type="molecule type" value="mRNA"/>
</dbReference>
<dbReference type="EMBL" id="AB043893">
    <property type="protein sequence ID" value="BAB18580.1"/>
    <property type="molecule type" value="mRNA"/>
</dbReference>
<dbReference type="EMBL" id="AK004739">
    <property type="protein sequence ID" value="BAB23520.1"/>
    <property type="molecule type" value="mRNA"/>
</dbReference>
<dbReference type="EMBL" id="AL929318">
    <property type="status" value="NOT_ANNOTATED_CDS"/>
    <property type="molecule type" value="Genomic_DNA"/>
</dbReference>
<dbReference type="EMBL" id="BC042497">
    <property type="protein sequence ID" value="AAH42497.1"/>
    <property type="molecule type" value="mRNA"/>
</dbReference>
<dbReference type="EMBL" id="BC049130">
    <property type="protein sequence ID" value="AAH49130.1"/>
    <property type="molecule type" value="mRNA"/>
</dbReference>
<dbReference type="CCDS" id="CCDS16600.1"/>
<dbReference type="PIR" id="JC7569">
    <property type="entry name" value="JC7569"/>
</dbReference>
<dbReference type="RefSeq" id="NP_062327.2">
    <property type="nucleotide sequence ID" value="NM_019454.4"/>
</dbReference>
<dbReference type="SMR" id="Q9JI71"/>
<dbReference type="BioGRID" id="207669">
    <property type="interactions" value="3"/>
</dbReference>
<dbReference type="FunCoup" id="Q9JI71">
    <property type="interactions" value="703"/>
</dbReference>
<dbReference type="IntAct" id="Q9JI71">
    <property type="interactions" value="4"/>
</dbReference>
<dbReference type="STRING" id="10090.ENSMUSP00000099575"/>
<dbReference type="GlyCosmos" id="Q9JI71">
    <property type="glycosylation" value="5 sites, No reported glycans"/>
</dbReference>
<dbReference type="GlyGen" id="Q9JI71">
    <property type="glycosylation" value="5 sites"/>
</dbReference>
<dbReference type="iPTMnet" id="Q9JI71"/>
<dbReference type="PhosphoSitePlus" id="Q9JI71"/>
<dbReference type="PaxDb" id="10090-ENSMUSP00000099575"/>
<dbReference type="ProteomicsDB" id="277468"/>
<dbReference type="ABCD" id="Q9JI71">
    <property type="antibodies" value="3 sequenced antibodies"/>
</dbReference>
<dbReference type="Antibodypedia" id="5995">
    <property type="antibodies" value="961 antibodies from 46 providers"/>
</dbReference>
<dbReference type="DNASU" id="54485"/>
<dbReference type="Ensembl" id="ENSMUST00000102517.4">
    <property type="protein sequence ID" value="ENSMUSP00000099575.4"/>
    <property type="gene ID" value="ENSMUSG00000027314.7"/>
</dbReference>
<dbReference type="GeneID" id="54485"/>
<dbReference type="KEGG" id="mmu:54485"/>
<dbReference type="UCSC" id="uc008ltr.2">
    <property type="organism name" value="mouse"/>
</dbReference>
<dbReference type="AGR" id="MGI:1859388"/>
<dbReference type="CTD" id="54567"/>
<dbReference type="MGI" id="MGI:1859388">
    <property type="gene designation" value="Dll4"/>
</dbReference>
<dbReference type="VEuPathDB" id="HostDB:ENSMUSG00000027314"/>
<dbReference type="eggNOG" id="KOG1217">
    <property type="taxonomic scope" value="Eukaryota"/>
</dbReference>
<dbReference type="GeneTree" id="ENSGT00940000157441"/>
<dbReference type="HOGENOM" id="CLU_012574_1_0_1"/>
<dbReference type="InParanoid" id="Q9JI71"/>
<dbReference type="OMA" id="ICLAGCT"/>
<dbReference type="OrthoDB" id="283575at2759"/>
<dbReference type="PhylomeDB" id="Q9JI71"/>
<dbReference type="TreeFam" id="TF351835"/>
<dbReference type="Reactome" id="R-MMU-2979096">
    <property type="pathway name" value="NOTCH2 Activation and Transmission of Signal to the Nucleus"/>
</dbReference>
<dbReference type="Reactome" id="R-MMU-9013507">
    <property type="pathway name" value="NOTCH3 Activation and Transmission of Signal to the Nucleus"/>
</dbReference>
<dbReference type="BioGRID-ORCS" id="54485">
    <property type="hits" value="2 hits in 78 CRISPR screens"/>
</dbReference>
<dbReference type="PRO" id="PR:Q9JI71"/>
<dbReference type="Proteomes" id="UP000000589">
    <property type="component" value="Chromosome 2"/>
</dbReference>
<dbReference type="RNAct" id="Q9JI71">
    <property type="molecule type" value="protein"/>
</dbReference>
<dbReference type="Bgee" id="ENSMUSG00000027314">
    <property type="expression patterns" value="Expressed in interventricular septum and 168 other cell types or tissues"/>
</dbReference>
<dbReference type="GO" id="GO:0005886">
    <property type="term" value="C:plasma membrane"/>
    <property type="evidence" value="ECO:0000250"/>
    <property type="project" value="MGI"/>
</dbReference>
<dbReference type="GO" id="GO:0005509">
    <property type="term" value="F:calcium ion binding"/>
    <property type="evidence" value="ECO:0007669"/>
    <property type="project" value="InterPro"/>
</dbReference>
<dbReference type="GO" id="GO:0005112">
    <property type="term" value="F:Notch binding"/>
    <property type="evidence" value="ECO:0000314"/>
    <property type="project" value="MGI"/>
</dbReference>
<dbReference type="GO" id="GO:0048018">
    <property type="term" value="F:receptor ligand activity"/>
    <property type="evidence" value="ECO:0007669"/>
    <property type="project" value="Ensembl"/>
</dbReference>
<dbReference type="GO" id="GO:0001525">
    <property type="term" value="P:angiogenesis"/>
    <property type="evidence" value="ECO:0000315"/>
    <property type="project" value="MGI"/>
</dbReference>
<dbReference type="GO" id="GO:0003180">
    <property type="term" value="P:aortic valve morphogenesis"/>
    <property type="evidence" value="ECO:0007669"/>
    <property type="project" value="Ensembl"/>
</dbReference>
<dbReference type="GO" id="GO:0072554">
    <property type="term" value="P:blood vessel lumenization"/>
    <property type="evidence" value="ECO:0000315"/>
    <property type="project" value="BHF-UCL"/>
</dbReference>
<dbReference type="GO" id="GO:0001974">
    <property type="term" value="P:blood vessel remodeling"/>
    <property type="evidence" value="ECO:0000315"/>
    <property type="project" value="BHF-UCL"/>
</dbReference>
<dbReference type="GO" id="GO:0001569">
    <property type="term" value="P:branching involved in blood vessel morphogenesis"/>
    <property type="evidence" value="ECO:0000315"/>
    <property type="project" value="BHF-UCL"/>
</dbReference>
<dbReference type="GO" id="GO:0003209">
    <property type="term" value="P:cardiac atrium morphogenesis"/>
    <property type="evidence" value="ECO:0000315"/>
    <property type="project" value="BHF-UCL"/>
</dbReference>
<dbReference type="GO" id="GO:0003208">
    <property type="term" value="P:cardiac ventricle morphogenesis"/>
    <property type="evidence" value="ECO:0000315"/>
    <property type="project" value="BHF-UCL"/>
</dbReference>
<dbReference type="GO" id="GO:0044344">
    <property type="term" value="P:cellular response to fibroblast growth factor stimulus"/>
    <property type="evidence" value="ECO:0000250"/>
    <property type="project" value="UniProtKB"/>
</dbReference>
<dbReference type="GO" id="GO:0035924">
    <property type="term" value="P:cellular response to vascular endothelial growth factor stimulus"/>
    <property type="evidence" value="ECO:0000250"/>
    <property type="project" value="UniProtKB"/>
</dbReference>
<dbReference type="GO" id="GO:0035912">
    <property type="term" value="P:dorsal aorta morphogenesis"/>
    <property type="evidence" value="ECO:0000315"/>
    <property type="project" value="BHF-UCL"/>
</dbReference>
<dbReference type="GO" id="GO:0043537">
    <property type="term" value="P:negative regulation of blood vessel endothelial cell migration"/>
    <property type="evidence" value="ECO:0000314"/>
    <property type="project" value="MGI"/>
</dbReference>
<dbReference type="GO" id="GO:1903588">
    <property type="term" value="P:negative regulation of blood vessel endothelial cell proliferation involved in sprouting angiogenesis"/>
    <property type="evidence" value="ECO:0007669"/>
    <property type="project" value="Ensembl"/>
</dbReference>
<dbReference type="GO" id="GO:0090051">
    <property type="term" value="P:negative regulation of cell migration involved in sprouting angiogenesis"/>
    <property type="evidence" value="ECO:0000250"/>
    <property type="project" value="UniProtKB"/>
</dbReference>
<dbReference type="GO" id="GO:0008285">
    <property type="term" value="P:negative regulation of cell population proliferation"/>
    <property type="evidence" value="ECO:0000250"/>
    <property type="project" value="UniProtKB"/>
</dbReference>
<dbReference type="GO" id="GO:0010596">
    <property type="term" value="P:negative regulation of endothelial cell migration"/>
    <property type="evidence" value="ECO:0000250"/>
    <property type="project" value="UniProtKB"/>
</dbReference>
<dbReference type="GO" id="GO:0010629">
    <property type="term" value="P:negative regulation of gene expression"/>
    <property type="evidence" value="ECO:0007669"/>
    <property type="project" value="Ensembl"/>
</dbReference>
<dbReference type="GO" id="GO:0045746">
    <property type="term" value="P:negative regulation of Notch signaling pathway"/>
    <property type="evidence" value="ECO:0000314"/>
    <property type="project" value="UniProtKB"/>
</dbReference>
<dbReference type="GO" id="GO:0000122">
    <property type="term" value="P:negative regulation of transcription by RNA polymerase II"/>
    <property type="evidence" value="ECO:0000315"/>
    <property type="project" value="BHF-UCL"/>
</dbReference>
<dbReference type="GO" id="GO:0007219">
    <property type="term" value="P:Notch signaling pathway"/>
    <property type="evidence" value="ECO:0000314"/>
    <property type="project" value="MGI"/>
</dbReference>
<dbReference type="GO" id="GO:0003344">
    <property type="term" value="P:pericardium morphogenesis"/>
    <property type="evidence" value="ECO:0000315"/>
    <property type="project" value="BHF-UCL"/>
</dbReference>
<dbReference type="GO" id="GO:0010628">
    <property type="term" value="P:positive regulation of gene expression"/>
    <property type="evidence" value="ECO:0007669"/>
    <property type="project" value="Ensembl"/>
</dbReference>
<dbReference type="GO" id="GO:2000179">
    <property type="term" value="P:positive regulation of neural precursor cell proliferation"/>
    <property type="evidence" value="ECO:0000315"/>
    <property type="project" value="UniProtKB"/>
</dbReference>
<dbReference type="GO" id="GO:0045747">
    <property type="term" value="P:positive regulation of Notch signaling pathway"/>
    <property type="evidence" value="ECO:0000314"/>
    <property type="project" value="UniProtKB"/>
</dbReference>
<dbReference type="GO" id="GO:0061074">
    <property type="term" value="P:regulation of neural retina development"/>
    <property type="evidence" value="ECO:0000315"/>
    <property type="project" value="UniProtKB"/>
</dbReference>
<dbReference type="GO" id="GO:0050767">
    <property type="term" value="P:regulation of neurogenesis"/>
    <property type="evidence" value="ECO:0000315"/>
    <property type="project" value="MGI"/>
</dbReference>
<dbReference type="GO" id="GO:0030217">
    <property type="term" value="P:T cell differentiation"/>
    <property type="evidence" value="ECO:0000314"/>
    <property type="project" value="UniProtKB"/>
</dbReference>
<dbReference type="GO" id="GO:0060579">
    <property type="term" value="P:ventral spinal cord interneuron fate commitment"/>
    <property type="evidence" value="ECO:0000250"/>
    <property type="project" value="UniProtKB"/>
</dbReference>
<dbReference type="GO" id="GO:0003222">
    <property type="term" value="P:ventricular trabecula myocardium morphogenesis"/>
    <property type="evidence" value="ECO:0000315"/>
    <property type="project" value="BHF-UCL"/>
</dbReference>
<dbReference type="GO" id="GO:0007601">
    <property type="term" value="P:visual perception"/>
    <property type="evidence" value="ECO:0007669"/>
    <property type="project" value="UniProtKB-KW"/>
</dbReference>
<dbReference type="CDD" id="cd00054">
    <property type="entry name" value="EGF_CA"/>
    <property type="match status" value="5"/>
</dbReference>
<dbReference type="FunFam" id="2.10.25.10:FF:000018">
    <property type="entry name" value="Delta-like 1"/>
    <property type="match status" value="1"/>
</dbReference>
<dbReference type="FunFam" id="2.10.25.10:FF:000012">
    <property type="entry name" value="Delta-like protein"/>
    <property type="match status" value="3"/>
</dbReference>
<dbReference type="FunFam" id="2.10.25.10:FF:000064">
    <property type="entry name" value="Delta-like protein"/>
    <property type="match status" value="1"/>
</dbReference>
<dbReference type="FunFam" id="2.10.25.10:FF:000398">
    <property type="entry name" value="Delta-like protein"/>
    <property type="match status" value="1"/>
</dbReference>
<dbReference type="FunFam" id="2.10.25.140:FF:000001">
    <property type="entry name" value="Delta-like protein"/>
    <property type="match status" value="1"/>
</dbReference>
<dbReference type="FunFam" id="2.60.40.3510:FF:000003">
    <property type="entry name" value="Delta-like protein"/>
    <property type="match status" value="1"/>
</dbReference>
<dbReference type="FunFam" id="2.10.25.10:FF:000347">
    <property type="entry name" value="delta-like protein 3"/>
    <property type="match status" value="1"/>
</dbReference>
<dbReference type="Gene3D" id="2.10.25.140">
    <property type="match status" value="1"/>
</dbReference>
<dbReference type="Gene3D" id="2.60.40.3510">
    <property type="match status" value="1"/>
</dbReference>
<dbReference type="Gene3D" id="2.10.25.10">
    <property type="entry name" value="Laminin"/>
    <property type="match status" value="7"/>
</dbReference>
<dbReference type="InterPro" id="IPR001774">
    <property type="entry name" value="DSL"/>
</dbReference>
<dbReference type="InterPro" id="IPR001881">
    <property type="entry name" value="EGF-like_Ca-bd_dom"/>
</dbReference>
<dbReference type="InterPro" id="IPR013032">
    <property type="entry name" value="EGF-like_CS"/>
</dbReference>
<dbReference type="InterPro" id="IPR000742">
    <property type="entry name" value="EGF-like_dom"/>
</dbReference>
<dbReference type="InterPro" id="IPR000152">
    <property type="entry name" value="EGF-type_Asp/Asn_hydroxyl_site"/>
</dbReference>
<dbReference type="InterPro" id="IPR009030">
    <property type="entry name" value="Growth_fac_rcpt_cys_sf"/>
</dbReference>
<dbReference type="InterPro" id="IPR051022">
    <property type="entry name" value="Notch_Cell-Fate_Det"/>
</dbReference>
<dbReference type="InterPro" id="IPR011651">
    <property type="entry name" value="Notch_ligand_N"/>
</dbReference>
<dbReference type="PANTHER" id="PTHR24049:SF30">
    <property type="match status" value="1"/>
</dbReference>
<dbReference type="PANTHER" id="PTHR24049">
    <property type="entry name" value="CRUMBS FAMILY MEMBER"/>
    <property type="match status" value="1"/>
</dbReference>
<dbReference type="Pfam" id="PF01414">
    <property type="entry name" value="DSL"/>
    <property type="match status" value="1"/>
</dbReference>
<dbReference type="Pfam" id="PF00008">
    <property type="entry name" value="EGF"/>
    <property type="match status" value="4"/>
</dbReference>
<dbReference type="Pfam" id="PF12661">
    <property type="entry name" value="hEGF"/>
    <property type="match status" value="1"/>
</dbReference>
<dbReference type="Pfam" id="PF21795">
    <property type="entry name" value="JAG1-like_EGF2"/>
    <property type="match status" value="1"/>
</dbReference>
<dbReference type="Pfam" id="PF07657">
    <property type="entry name" value="MNNL"/>
    <property type="match status" value="1"/>
</dbReference>
<dbReference type="PRINTS" id="PR00010">
    <property type="entry name" value="EGFBLOOD"/>
</dbReference>
<dbReference type="SMART" id="SM00051">
    <property type="entry name" value="DSL"/>
    <property type="match status" value="1"/>
</dbReference>
<dbReference type="SMART" id="SM00181">
    <property type="entry name" value="EGF"/>
    <property type="match status" value="9"/>
</dbReference>
<dbReference type="SMART" id="SM00179">
    <property type="entry name" value="EGF_CA"/>
    <property type="match status" value="6"/>
</dbReference>
<dbReference type="SUPFAM" id="SSF57196">
    <property type="entry name" value="EGF/Laminin"/>
    <property type="match status" value="2"/>
</dbReference>
<dbReference type="SUPFAM" id="SSF57184">
    <property type="entry name" value="Growth factor receptor domain"/>
    <property type="match status" value="1"/>
</dbReference>
<dbReference type="PROSITE" id="PS00010">
    <property type="entry name" value="ASX_HYDROXYL"/>
    <property type="match status" value="1"/>
</dbReference>
<dbReference type="PROSITE" id="PS51051">
    <property type="entry name" value="DSL"/>
    <property type="match status" value="1"/>
</dbReference>
<dbReference type="PROSITE" id="PS00022">
    <property type="entry name" value="EGF_1"/>
    <property type="match status" value="8"/>
</dbReference>
<dbReference type="PROSITE" id="PS01186">
    <property type="entry name" value="EGF_2"/>
    <property type="match status" value="7"/>
</dbReference>
<dbReference type="PROSITE" id="PS50026">
    <property type="entry name" value="EGF_3"/>
    <property type="match status" value="8"/>
</dbReference>
<reference key="1">
    <citation type="journal article" date="2000" name="Genes Dev.">
        <title>Dll4, a novel Notch ligand expressed in arterial endothelium.</title>
        <authorList>
            <person name="Shutter J.R."/>
            <person name="Scully S."/>
            <person name="Fan W."/>
            <person name="Richards W.G."/>
            <person name="Kitajewski J."/>
            <person name="Deblandre G.A."/>
            <person name="Kintner C.R."/>
            <person name="Stark K.L."/>
        </authorList>
    </citation>
    <scope>NUCLEOTIDE SEQUENCE [MRNA]</scope>
    <source>
        <tissue>Adipose tissue</tissue>
    </source>
</reference>
<reference key="2">
    <citation type="journal article" date="2001" name="J. Biochem.">
        <title>Molecular cloning of Delta-4, a new mouse and human Notch ligand.</title>
        <authorList>
            <person name="Yoneya T."/>
            <person name="Tahara T."/>
            <person name="Nagao K."/>
            <person name="Yamada Y."/>
            <person name="Yamamoto T."/>
            <person name="Miyatani S."/>
            <person name="Nishikawa M."/>
        </authorList>
    </citation>
    <scope>NUCLEOTIDE SEQUENCE [MRNA]</scope>
    <scope>FUNCTION</scope>
</reference>
<reference key="3">
    <citation type="submission" date="2000-05" db="EMBL/GenBank/DDBJ databases">
        <title>A novel Notch ligand expressed in embryonic and tumour vasculation.</title>
        <authorList>
            <person name="Mailhos C."/>
            <person name="Lewis J."/>
            <person name="Ish-Horowicz D."/>
        </authorList>
    </citation>
    <scope>NUCLEOTIDE SEQUENCE [MRNA]</scope>
    <source>
        <strain>129/Ola</strain>
    </source>
</reference>
<reference key="4">
    <citation type="journal article" date="2005" name="Science">
        <title>The transcriptional landscape of the mammalian genome.</title>
        <authorList>
            <person name="Carninci P."/>
            <person name="Kasukawa T."/>
            <person name="Katayama S."/>
            <person name="Gough J."/>
            <person name="Frith M.C."/>
            <person name="Maeda N."/>
            <person name="Oyama R."/>
            <person name="Ravasi T."/>
            <person name="Lenhard B."/>
            <person name="Wells C."/>
            <person name="Kodzius R."/>
            <person name="Shimokawa K."/>
            <person name="Bajic V.B."/>
            <person name="Brenner S.E."/>
            <person name="Batalov S."/>
            <person name="Forrest A.R."/>
            <person name="Zavolan M."/>
            <person name="Davis M.J."/>
            <person name="Wilming L.G."/>
            <person name="Aidinis V."/>
            <person name="Allen J.E."/>
            <person name="Ambesi-Impiombato A."/>
            <person name="Apweiler R."/>
            <person name="Aturaliya R.N."/>
            <person name="Bailey T.L."/>
            <person name="Bansal M."/>
            <person name="Baxter L."/>
            <person name="Beisel K.W."/>
            <person name="Bersano T."/>
            <person name="Bono H."/>
            <person name="Chalk A.M."/>
            <person name="Chiu K.P."/>
            <person name="Choudhary V."/>
            <person name="Christoffels A."/>
            <person name="Clutterbuck D.R."/>
            <person name="Crowe M.L."/>
            <person name="Dalla E."/>
            <person name="Dalrymple B.P."/>
            <person name="de Bono B."/>
            <person name="Della Gatta G."/>
            <person name="di Bernardo D."/>
            <person name="Down T."/>
            <person name="Engstrom P."/>
            <person name="Fagiolini M."/>
            <person name="Faulkner G."/>
            <person name="Fletcher C.F."/>
            <person name="Fukushima T."/>
            <person name="Furuno M."/>
            <person name="Futaki S."/>
            <person name="Gariboldi M."/>
            <person name="Georgii-Hemming P."/>
            <person name="Gingeras T.R."/>
            <person name="Gojobori T."/>
            <person name="Green R.E."/>
            <person name="Gustincich S."/>
            <person name="Harbers M."/>
            <person name="Hayashi Y."/>
            <person name="Hensch T.K."/>
            <person name="Hirokawa N."/>
            <person name="Hill D."/>
            <person name="Huminiecki L."/>
            <person name="Iacono M."/>
            <person name="Ikeo K."/>
            <person name="Iwama A."/>
            <person name="Ishikawa T."/>
            <person name="Jakt M."/>
            <person name="Kanapin A."/>
            <person name="Katoh M."/>
            <person name="Kawasawa Y."/>
            <person name="Kelso J."/>
            <person name="Kitamura H."/>
            <person name="Kitano H."/>
            <person name="Kollias G."/>
            <person name="Krishnan S.P."/>
            <person name="Kruger A."/>
            <person name="Kummerfeld S.K."/>
            <person name="Kurochkin I.V."/>
            <person name="Lareau L.F."/>
            <person name="Lazarevic D."/>
            <person name="Lipovich L."/>
            <person name="Liu J."/>
            <person name="Liuni S."/>
            <person name="McWilliam S."/>
            <person name="Madan Babu M."/>
            <person name="Madera M."/>
            <person name="Marchionni L."/>
            <person name="Matsuda H."/>
            <person name="Matsuzawa S."/>
            <person name="Miki H."/>
            <person name="Mignone F."/>
            <person name="Miyake S."/>
            <person name="Morris K."/>
            <person name="Mottagui-Tabar S."/>
            <person name="Mulder N."/>
            <person name="Nakano N."/>
            <person name="Nakauchi H."/>
            <person name="Ng P."/>
            <person name="Nilsson R."/>
            <person name="Nishiguchi S."/>
            <person name="Nishikawa S."/>
            <person name="Nori F."/>
            <person name="Ohara O."/>
            <person name="Okazaki Y."/>
            <person name="Orlando V."/>
            <person name="Pang K.C."/>
            <person name="Pavan W.J."/>
            <person name="Pavesi G."/>
            <person name="Pesole G."/>
            <person name="Petrovsky N."/>
            <person name="Piazza S."/>
            <person name="Reed J."/>
            <person name="Reid J.F."/>
            <person name="Ring B.Z."/>
            <person name="Ringwald M."/>
            <person name="Rost B."/>
            <person name="Ruan Y."/>
            <person name="Salzberg S.L."/>
            <person name="Sandelin A."/>
            <person name="Schneider C."/>
            <person name="Schoenbach C."/>
            <person name="Sekiguchi K."/>
            <person name="Semple C.A."/>
            <person name="Seno S."/>
            <person name="Sessa L."/>
            <person name="Sheng Y."/>
            <person name="Shibata Y."/>
            <person name="Shimada H."/>
            <person name="Shimada K."/>
            <person name="Silva D."/>
            <person name="Sinclair B."/>
            <person name="Sperling S."/>
            <person name="Stupka E."/>
            <person name="Sugiura K."/>
            <person name="Sultana R."/>
            <person name="Takenaka Y."/>
            <person name="Taki K."/>
            <person name="Tammoja K."/>
            <person name="Tan S.L."/>
            <person name="Tang S."/>
            <person name="Taylor M.S."/>
            <person name="Tegner J."/>
            <person name="Teichmann S.A."/>
            <person name="Ueda H.R."/>
            <person name="van Nimwegen E."/>
            <person name="Verardo R."/>
            <person name="Wei C.L."/>
            <person name="Yagi K."/>
            <person name="Yamanishi H."/>
            <person name="Zabarovsky E."/>
            <person name="Zhu S."/>
            <person name="Zimmer A."/>
            <person name="Hide W."/>
            <person name="Bult C."/>
            <person name="Grimmond S.M."/>
            <person name="Teasdale R.D."/>
            <person name="Liu E.T."/>
            <person name="Brusic V."/>
            <person name="Quackenbush J."/>
            <person name="Wahlestedt C."/>
            <person name="Mattick J.S."/>
            <person name="Hume D.A."/>
            <person name="Kai C."/>
            <person name="Sasaki D."/>
            <person name="Tomaru Y."/>
            <person name="Fukuda S."/>
            <person name="Kanamori-Katayama M."/>
            <person name="Suzuki M."/>
            <person name="Aoki J."/>
            <person name="Arakawa T."/>
            <person name="Iida J."/>
            <person name="Imamura K."/>
            <person name="Itoh M."/>
            <person name="Kato T."/>
            <person name="Kawaji H."/>
            <person name="Kawagashira N."/>
            <person name="Kawashima T."/>
            <person name="Kojima M."/>
            <person name="Kondo S."/>
            <person name="Konno H."/>
            <person name="Nakano K."/>
            <person name="Ninomiya N."/>
            <person name="Nishio T."/>
            <person name="Okada M."/>
            <person name="Plessy C."/>
            <person name="Shibata K."/>
            <person name="Shiraki T."/>
            <person name="Suzuki S."/>
            <person name="Tagami M."/>
            <person name="Waki K."/>
            <person name="Watahiki A."/>
            <person name="Okamura-Oho Y."/>
            <person name="Suzuki H."/>
            <person name="Kawai J."/>
            <person name="Hayashizaki Y."/>
        </authorList>
    </citation>
    <scope>NUCLEOTIDE SEQUENCE [LARGE SCALE MRNA]</scope>
    <source>
        <strain>C57BL/6J</strain>
        <tissue>Lung</tissue>
    </source>
</reference>
<reference key="5">
    <citation type="journal article" date="2009" name="PLoS Biol.">
        <title>Lineage-specific biology revealed by a finished genome assembly of the mouse.</title>
        <authorList>
            <person name="Church D.M."/>
            <person name="Goodstadt L."/>
            <person name="Hillier L.W."/>
            <person name="Zody M.C."/>
            <person name="Goldstein S."/>
            <person name="She X."/>
            <person name="Bult C.J."/>
            <person name="Agarwala R."/>
            <person name="Cherry J.L."/>
            <person name="DiCuccio M."/>
            <person name="Hlavina W."/>
            <person name="Kapustin Y."/>
            <person name="Meric P."/>
            <person name="Maglott D."/>
            <person name="Birtle Z."/>
            <person name="Marques A.C."/>
            <person name="Graves T."/>
            <person name="Zhou S."/>
            <person name="Teague B."/>
            <person name="Potamousis K."/>
            <person name="Churas C."/>
            <person name="Place M."/>
            <person name="Herschleb J."/>
            <person name="Runnheim R."/>
            <person name="Forrest D."/>
            <person name="Amos-Landgraf J."/>
            <person name="Schwartz D.C."/>
            <person name="Cheng Z."/>
            <person name="Lindblad-Toh K."/>
            <person name="Eichler E.E."/>
            <person name="Ponting C.P."/>
        </authorList>
    </citation>
    <scope>NUCLEOTIDE SEQUENCE [LARGE SCALE GENOMIC DNA]</scope>
    <source>
        <strain>C57BL/6J</strain>
    </source>
</reference>
<reference key="6">
    <citation type="journal article" date="2004" name="Genome Res.">
        <title>The status, quality, and expansion of the NIH full-length cDNA project: the Mammalian Gene Collection (MGC).</title>
        <authorList>
            <consortium name="The MGC Project Team"/>
        </authorList>
    </citation>
    <scope>NUCLEOTIDE SEQUENCE [LARGE SCALE MRNA]</scope>
    <source>
        <strain>C57BL/6J</strain>
        <strain>Czech II</strain>
        <tissue>Brain</tissue>
        <tissue>Mammary tumor</tissue>
    </source>
</reference>
<reference key="7">
    <citation type="journal article" date="2012" name="Proc. Natl. Acad. Sci. U.S.A.">
        <title>Forkhead box N4 (Foxn4) activates Dll4-Notch signaling to suppress photoreceptor cell fates of early retinal progenitors.</title>
        <authorList>
            <person name="Luo H."/>
            <person name="Jin K."/>
            <person name="Xie Z."/>
            <person name="Qiu F."/>
            <person name="Li S."/>
            <person name="Zou M."/>
            <person name="Cai L."/>
            <person name="Hozumi K."/>
            <person name="Shima D.T."/>
            <person name="Xiang M."/>
        </authorList>
    </citation>
    <scope>FUNCTION IN RETINAL DEVELOPMENT</scope>
    <scope>TISSUE SPECIFICITY</scope>
    <scope>DEVELOPMENTAL STAGE</scope>
    <scope>DISRUPTION PHENOTYPE</scope>
</reference>
<evidence type="ECO:0000250" key="1"/>
<evidence type="ECO:0000250" key="2">
    <source>
        <dbReference type="UniProtKB" id="D3ZHH1"/>
    </source>
</evidence>
<evidence type="ECO:0000250" key="3">
    <source>
        <dbReference type="UniProtKB" id="Q9NR61"/>
    </source>
</evidence>
<evidence type="ECO:0000255" key="4"/>
<evidence type="ECO:0000255" key="5">
    <source>
        <dbReference type="PROSITE-ProRule" id="PRU00076"/>
    </source>
</evidence>
<evidence type="ECO:0000255" key="6">
    <source>
        <dbReference type="PROSITE-ProRule" id="PRU00377"/>
    </source>
</evidence>
<evidence type="ECO:0000269" key="7">
    <source>
    </source>
</evidence>
<evidence type="ECO:0000269" key="8">
    <source>
    </source>
</evidence>
<evidence type="ECO:0000305" key="9"/>
<feature type="signal peptide" evidence="4">
    <location>
        <begin position="1"/>
        <end position="26"/>
    </location>
</feature>
<feature type="chain" id="PRO_0000007513" description="Delta-like protein 4">
    <location>
        <begin position="27"/>
        <end position="686"/>
    </location>
</feature>
<feature type="topological domain" description="Extracellular" evidence="4">
    <location>
        <begin position="27"/>
        <end position="532"/>
    </location>
</feature>
<feature type="transmembrane region" description="Helical" evidence="4">
    <location>
        <begin position="533"/>
        <end position="553"/>
    </location>
</feature>
<feature type="topological domain" description="Cytoplasmic" evidence="4">
    <location>
        <begin position="554"/>
        <end position="686"/>
    </location>
</feature>
<feature type="domain" description="DSL" evidence="6">
    <location>
        <begin position="174"/>
        <end position="218"/>
    </location>
</feature>
<feature type="domain" description="EGF-like 1" evidence="5">
    <location>
        <begin position="219"/>
        <end position="252"/>
    </location>
</feature>
<feature type="domain" description="EGF-like 2" evidence="5">
    <location>
        <begin position="253"/>
        <end position="283"/>
    </location>
</feature>
<feature type="domain" description="EGF-like 3" evidence="5">
    <location>
        <begin position="285"/>
        <end position="323"/>
    </location>
</feature>
<feature type="domain" description="EGF-like 4" evidence="5">
    <location>
        <begin position="325"/>
        <end position="361"/>
    </location>
</feature>
<feature type="domain" description="EGF-like 5" evidence="5">
    <location>
        <begin position="364"/>
        <end position="401"/>
    </location>
</feature>
<feature type="domain" description="EGF-like 6" evidence="5">
    <location>
        <begin position="403"/>
        <end position="439"/>
    </location>
</feature>
<feature type="domain" description="EGF-like 7" evidence="5">
    <location>
        <begin position="441"/>
        <end position="477"/>
    </location>
</feature>
<feature type="domain" description="EGF-like 8" evidence="5">
    <location>
        <begin position="481"/>
        <end position="519"/>
    </location>
</feature>
<feature type="region of interest" description="Interaction with Notch1" evidence="2">
    <location>
        <begin position="186"/>
        <end position="188"/>
    </location>
</feature>
<feature type="region of interest" description="Interaction with Notch1" evidence="2">
    <location>
        <begin position="192"/>
        <end position="196"/>
    </location>
</feature>
<feature type="site" description="Interaction with Notch1" evidence="2">
    <location>
        <position position="111"/>
    </location>
</feature>
<feature type="site" description="Interaction with Notch1" evidence="2">
    <location>
        <position position="217"/>
    </location>
</feature>
<feature type="glycosylation site" description="N-linked (GlcNAc...) asparagine" evidence="2">
    <location>
        <position position="79"/>
    </location>
</feature>
<feature type="glycosylation site" description="N-linked (GlcNAc...) asparagine" evidence="2">
    <location>
        <position position="109"/>
    </location>
</feature>
<feature type="glycosylation site" description="N-linked (GlcNAc...) asparagine" evidence="2">
    <location>
        <position position="162"/>
    </location>
</feature>
<feature type="glycosylation site" description="N-linked (GlcNAc...) asparagine" evidence="4">
    <location>
        <position position="297"/>
    </location>
</feature>
<feature type="glycosylation site" description="N-linked (GlcNAc...) asparagine" evidence="4">
    <location>
        <position position="394"/>
    </location>
</feature>
<feature type="disulfide bond" evidence="2">
    <location>
        <begin position="51"/>
        <end position="55"/>
    </location>
</feature>
<feature type="disulfide bond" evidence="2">
    <location>
        <begin position="62"/>
        <end position="75"/>
    </location>
</feature>
<feature type="disulfide bond" evidence="2 6">
    <location>
        <begin position="176"/>
        <end position="185"/>
    </location>
</feature>
<feature type="disulfide bond" evidence="2 6">
    <location>
        <begin position="189"/>
        <end position="201"/>
    </location>
</feature>
<feature type="disulfide bond" evidence="2 6">
    <location>
        <begin position="209"/>
        <end position="218"/>
    </location>
</feature>
<feature type="disulfide bond" evidence="2 5">
    <location>
        <begin position="223"/>
        <end position="234"/>
    </location>
</feature>
<feature type="disulfide bond" evidence="2 5">
    <location>
        <begin position="227"/>
        <end position="240"/>
    </location>
</feature>
<feature type="disulfide bond" evidence="2 5">
    <location>
        <begin position="242"/>
        <end position="251"/>
    </location>
</feature>
<feature type="disulfide bond" evidence="2">
    <location>
        <begin position="254"/>
        <end position="265"/>
    </location>
</feature>
<feature type="disulfide bond" evidence="2">
    <location>
        <begin position="260"/>
        <end position="271"/>
    </location>
</feature>
<feature type="disulfide bond" evidence="2 5">
    <location>
        <begin position="273"/>
        <end position="282"/>
    </location>
</feature>
<feature type="disulfide bond" evidence="1">
    <location>
        <begin position="289"/>
        <end position="301"/>
    </location>
</feature>
<feature type="disulfide bond" evidence="1">
    <location>
        <begin position="295"/>
        <end position="311"/>
    </location>
</feature>
<feature type="disulfide bond" evidence="1">
    <location>
        <begin position="313"/>
        <end position="322"/>
    </location>
</feature>
<feature type="disulfide bond" evidence="1">
    <location>
        <begin position="329"/>
        <end position="340"/>
    </location>
</feature>
<feature type="disulfide bond" evidence="1">
    <location>
        <begin position="334"/>
        <end position="349"/>
    </location>
</feature>
<feature type="disulfide bond" evidence="1">
    <location>
        <begin position="351"/>
        <end position="360"/>
    </location>
</feature>
<feature type="disulfide bond" evidence="1">
    <location>
        <begin position="367"/>
        <end position="378"/>
    </location>
</feature>
<feature type="disulfide bond" evidence="1">
    <location>
        <begin position="372"/>
        <end position="389"/>
    </location>
</feature>
<feature type="disulfide bond" evidence="1">
    <location>
        <begin position="391"/>
        <end position="400"/>
    </location>
</feature>
<feature type="disulfide bond" evidence="1">
    <location>
        <begin position="407"/>
        <end position="418"/>
    </location>
</feature>
<feature type="disulfide bond" evidence="1">
    <location>
        <begin position="412"/>
        <end position="427"/>
    </location>
</feature>
<feature type="disulfide bond" evidence="1">
    <location>
        <begin position="429"/>
        <end position="438"/>
    </location>
</feature>
<feature type="disulfide bond" evidence="1">
    <location>
        <begin position="445"/>
        <end position="456"/>
    </location>
</feature>
<feature type="disulfide bond" evidence="1">
    <location>
        <begin position="450"/>
        <end position="465"/>
    </location>
</feature>
<feature type="disulfide bond" evidence="1">
    <location>
        <begin position="467"/>
        <end position="476"/>
    </location>
</feature>
<feature type="disulfide bond" evidence="1">
    <location>
        <begin position="485"/>
        <end position="496"/>
    </location>
</feature>
<feature type="disulfide bond" evidence="1">
    <location>
        <begin position="490"/>
        <end position="507"/>
    </location>
</feature>
<feature type="disulfide bond" evidence="1">
    <location>
        <begin position="509"/>
        <end position="518"/>
    </location>
</feature>
<feature type="sequence conflict" description="In Ref. 1; AAF76428 and 3; AAF78785." evidence="9" ref="1 3">
    <original>Q</original>
    <variation>L</variation>
    <location>
        <position position="419"/>
    </location>
</feature>
<feature type="sequence conflict" description="In Ref. 3; AAF78785." evidence="9" ref="3">
    <original>SF</original>
    <variation>CS</variation>
    <location>
        <begin position="527"/>
        <end position="528"/>
    </location>
</feature>
<feature type="sequence conflict" description="In Ref. 1; AAF76428 and 3; AAF78785." evidence="9" ref="1 3">
    <original>G</original>
    <variation>S</variation>
    <location>
        <position position="627"/>
    </location>
</feature>
<feature type="sequence conflict" description="In Ref. 3; AAF78785." evidence="9" ref="3">
    <original>LGEKVPLRLHS</original>
    <variation>IGQGATSVTH</variation>
    <location>
        <begin position="639"/>
        <end position="649"/>
    </location>
</feature>
<protein>
    <recommendedName>
        <fullName>Delta-like protein 4</fullName>
    </recommendedName>
    <alternativeName>
        <fullName>Drosophila Delta homolog 4</fullName>
        <shortName>Delta4</shortName>
    </alternativeName>
</protein>
<name>DLL4_MOUSE</name>
<gene>
    <name type="primary">Dll4</name>
</gene>
<comment type="function">
    <text evidence="3 7 8">Involved in the Notch signaling pathway as Notch ligand (PubMed:11134954). Activates NOTCH1 and NOTCH4. Involved in angiogenesis; negatively regulates endothelial cell proliferation and migration and angiogenic sprouting (By similarity). Essential for retinal progenitor proliferation. Required for suppressing rod fates in late retinal progenitors as well as for proper generation of other retinal cell types (PubMed:22323600). During spinal cord neurogenesis, inhibits V2a interneuron fate (By similarity).</text>
</comment>
<comment type="subunit">
    <text evidence="2">Interacts with NOTCH4. Interacts (via N-terminal DSL and MNNL domains) with NOTCH1 (via EGF-like domains).</text>
</comment>
<comment type="subcellular location">
    <subcellularLocation>
        <location evidence="9">Cell membrane</location>
        <topology evidence="9">Single-pass type I membrane protein</topology>
    </subcellularLocation>
</comment>
<comment type="tissue specificity">
    <text evidence="8">Expressed in vascular endothelium. Expressed in retina at least during embryogenesis.</text>
</comment>
<comment type="developmental stage">
    <text evidence="8">At 14.5, expressed within the retina outer neuroblastic layer.</text>
</comment>
<comment type="disruption phenotype">
    <text evidence="8">Conditional knockdowns in retinal progenitors have thinner retinas with occasional regions abnormally organized into rosette-like structures in the outer nuclear layer and an optic nerve with a reduced diameter.</text>
</comment>